<name>DCUP_SALEP</name>
<protein>
    <recommendedName>
        <fullName evidence="1">Uroporphyrinogen decarboxylase</fullName>
        <shortName evidence="1">UPD</shortName>
        <shortName evidence="1">URO-D</shortName>
        <ecNumber evidence="1">4.1.1.37</ecNumber>
    </recommendedName>
</protein>
<reference key="1">
    <citation type="journal article" date="2008" name="Genome Res.">
        <title>Comparative genome analysis of Salmonella enteritidis PT4 and Salmonella gallinarum 287/91 provides insights into evolutionary and host adaptation pathways.</title>
        <authorList>
            <person name="Thomson N.R."/>
            <person name="Clayton D.J."/>
            <person name="Windhorst D."/>
            <person name="Vernikos G."/>
            <person name="Davidson S."/>
            <person name="Churcher C."/>
            <person name="Quail M.A."/>
            <person name="Stevens M."/>
            <person name="Jones M.A."/>
            <person name="Watson M."/>
            <person name="Barron A."/>
            <person name="Layton A."/>
            <person name="Pickard D."/>
            <person name="Kingsley R.A."/>
            <person name="Bignell A."/>
            <person name="Clark L."/>
            <person name="Harris B."/>
            <person name="Ormond D."/>
            <person name="Abdellah Z."/>
            <person name="Brooks K."/>
            <person name="Cherevach I."/>
            <person name="Chillingworth T."/>
            <person name="Woodward J."/>
            <person name="Norberczak H."/>
            <person name="Lord A."/>
            <person name="Arrowsmith C."/>
            <person name="Jagels K."/>
            <person name="Moule S."/>
            <person name="Mungall K."/>
            <person name="Saunders M."/>
            <person name="Whitehead S."/>
            <person name="Chabalgoity J.A."/>
            <person name="Maskell D."/>
            <person name="Humphreys T."/>
            <person name="Roberts M."/>
            <person name="Barrow P.A."/>
            <person name="Dougan G."/>
            <person name="Parkhill J."/>
        </authorList>
    </citation>
    <scope>NUCLEOTIDE SEQUENCE [LARGE SCALE GENOMIC DNA]</scope>
    <source>
        <strain>P125109</strain>
    </source>
</reference>
<organism>
    <name type="scientific">Salmonella enteritidis PT4 (strain P125109)</name>
    <dbReference type="NCBI Taxonomy" id="550537"/>
    <lineage>
        <taxon>Bacteria</taxon>
        <taxon>Pseudomonadati</taxon>
        <taxon>Pseudomonadota</taxon>
        <taxon>Gammaproteobacteria</taxon>
        <taxon>Enterobacterales</taxon>
        <taxon>Enterobacteriaceae</taxon>
        <taxon>Salmonella</taxon>
    </lineage>
</organism>
<keyword id="KW-0963">Cytoplasm</keyword>
<keyword id="KW-0210">Decarboxylase</keyword>
<keyword id="KW-0456">Lyase</keyword>
<keyword id="KW-0627">Porphyrin biosynthesis</keyword>
<dbReference type="EC" id="4.1.1.37" evidence="1"/>
<dbReference type="EMBL" id="AM933172">
    <property type="protein sequence ID" value="CAR35522.1"/>
    <property type="molecule type" value="Genomic_DNA"/>
</dbReference>
<dbReference type="RefSeq" id="WP_000137619.1">
    <property type="nucleotide sequence ID" value="NC_011294.1"/>
</dbReference>
<dbReference type="SMR" id="B5QYF2"/>
<dbReference type="KEGG" id="set:SEN3953"/>
<dbReference type="HOGENOM" id="CLU_040933_0_0_6"/>
<dbReference type="UniPathway" id="UPA00251">
    <property type="reaction ID" value="UER00321"/>
</dbReference>
<dbReference type="Proteomes" id="UP000000613">
    <property type="component" value="Chromosome"/>
</dbReference>
<dbReference type="GO" id="GO:0005829">
    <property type="term" value="C:cytosol"/>
    <property type="evidence" value="ECO:0007669"/>
    <property type="project" value="TreeGrafter"/>
</dbReference>
<dbReference type="GO" id="GO:0004853">
    <property type="term" value="F:uroporphyrinogen decarboxylase activity"/>
    <property type="evidence" value="ECO:0007669"/>
    <property type="project" value="UniProtKB-UniRule"/>
</dbReference>
<dbReference type="GO" id="GO:0019353">
    <property type="term" value="P:protoporphyrinogen IX biosynthetic process from glutamate"/>
    <property type="evidence" value="ECO:0007669"/>
    <property type="project" value="TreeGrafter"/>
</dbReference>
<dbReference type="CDD" id="cd00717">
    <property type="entry name" value="URO-D"/>
    <property type="match status" value="1"/>
</dbReference>
<dbReference type="FunFam" id="3.20.20.210:FF:000001">
    <property type="entry name" value="Uroporphyrinogen decarboxylase"/>
    <property type="match status" value="1"/>
</dbReference>
<dbReference type="Gene3D" id="3.20.20.210">
    <property type="match status" value="1"/>
</dbReference>
<dbReference type="HAMAP" id="MF_00218">
    <property type="entry name" value="URO_D"/>
    <property type="match status" value="1"/>
</dbReference>
<dbReference type="InterPro" id="IPR038071">
    <property type="entry name" value="UROD/MetE-like_sf"/>
</dbReference>
<dbReference type="InterPro" id="IPR006361">
    <property type="entry name" value="Uroporphyrinogen_deCO2ase_HemE"/>
</dbReference>
<dbReference type="InterPro" id="IPR000257">
    <property type="entry name" value="Uroporphyrinogen_deCOase"/>
</dbReference>
<dbReference type="NCBIfam" id="TIGR01464">
    <property type="entry name" value="hemE"/>
    <property type="match status" value="1"/>
</dbReference>
<dbReference type="PANTHER" id="PTHR21091">
    <property type="entry name" value="METHYLTETRAHYDROFOLATE:HOMOCYSTEINE METHYLTRANSFERASE RELATED"/>
    <property type="match status" value="1"/>
</dbReference>
<dbReference type="PANTHER" id="PTHR21091:SF169">
    <property type="entry name" value="UROPORPHYRINOGEN DECARBOXYLASE"/>
    <property type="match status" value="1"/>
</dbReference>
<dbReference type="Pfam" id="PF01208">
    <property type="entry name" value="URO-D"/>
    <property type="match status" value="1"/>
</dbReference>
<dbReference type="SUPFAM" id="SSF51726">
    <property type="entry name" value="UROD/MetE-like"/>
    <property type="match status" value="1"/>
</dbReference>
<dbReference type="PROSITE" id="PS00906">
    <property type="entry name" value="UROD_1"/>
    <property type="match status" value="1"/>
</dbReference>
<dbReference type="PROSITE" id="PS00907">
    <property type="entry name" value="UROD_2"/>
    <property type="match status" value="1"/>
</dbReference>
<sequence>MTELKNDRYLRALLRQPVDVTPVWMMRQAGRYLPEYKATRAQAGDFMSLCKNAELACEVTLQPLRRYPLDAAILFSDILTIPDAMGLGLYFEAGEGPRFTAPVTCKADVDKLPIPDPEDELGYVMNAVRTIRRELKGEVPLIGFSGSPWTLATYMVEGGSSKAFTVIKKMMYADPQALHLLLDKLAKSVTLYLNAQIKAGAQSVMIFDTWGGVLTGRDYQQFSLYYMHKIVDGLLRENDGRRVPVTLFTKGGGQWLEAMAETGCDALGLDWTTDIADARRRVGHKVALQGNMDPSMLYAPPARIEDEVATILAGFGQGEGHVFNLGHGIHQDVPPEHAGAFVEAVHRLSAQYHN</sequence>
<evidence type="ECO:0000255" key="1">
    <source>
        <dbReference type="HAMAP-Rule" id="MF_00218"/>
    </source>
</evidence>
<accession>B5QYF2</accession>
<proteinExistence type="inferred from homology"/>
<gene>
    <name evidence="1" type="primary">hemE</name>
    <name type="ordered locus">SEN3953</name>
</gene>
<feature type="chain" id="PRO_1000100013" description="Uroporphyrinogen decarboxylase">
    <location>
        <begin position="1"/>
        <end position="354"/>
    </location>
</feature>
<feature type="binding site" evidence="1">
    <location>
        <begin position="27"/>
        <end position="31"/>
    </location>
    <ligand>
        <name>substrate</name>
    </ligand>
</feature>
<feature type="binding site" evidence="1">
    <location>
        <position position="77"/>
    </location>
    <ligand>
        <name>substrate</name>
    </ligand>
</feature>
<feature type="binding site" evidence="1">
    <location>
        <position position="154"/>
    </location>
    <ligand>
        <name>substrate</name>
    </ligand>
</feature>
<feature type="binding site" evidence="1">
    <location>
        <position position="209"/>
    </location>
    <ligand>
        <name>substrate</name>
    </ligand>
</feature>
<feature type="binding site" evidence="1">
    <location>
        <position position="327"/>
    </location>
    <ligand>
        <name>substrate</name>
    </ligand>
</feature>
<feature type="site" description="Transition state stabilizer" evidence="1">
    <location>
        <position position="77"/>
    </location>
</feature>
<comment type="function">
    <text evidence="1">Catalyzes the decarboxylation of four acetate groups of uroporphyrinogen-III to yield coproporphyrinogen-III.</text>
</comment>
<comment type="catalytic activity">
    <reaction evidence="1">
        <text>uroporphyrinogen III + 4 H(+) = coproporphyrinogen III + 4 CO2</text>
        <dbReference type="Rhea" id="RHEA:19865"/>
        <dbReference type="ChEBI" id="CHEBI:15378"/>
        <dbReference type="ChEBI" id="CHEBI:16526"/>
        <dbReference type="ChEBI" id="CHEBI:57308"/>
        <dbReference type="ChEBI" id="CHEBI:57309"/>
        <dbReference type="EC" id="4.1.1.37"/>
    </reaction>
</comment>
<comment type="pathway">
    <text evidence="1">Porphyrin-containing compound metabolism; protoporphyrin-IX biosynthesis; coproporphyrinogen-III from 5-aminolevulinate: step 4/4.</text>
</comment>
<comment type="subunit">
    <text evidence="1">Homodimer.</text>
</comment>
<comment type="subcellular location">
    <subcellularLocation>
        <location evidence="1">Cytoplasm</location>
    </subcellularLocation>
</comment>
<comment type="similarity">
    <text evidence="1">Belongs to the uroporphyrinogen decarboxylase family.</text>
</comment>